<name>GPMI_HYDCU</name>
<protein>
    <recommendedName>
        <fullName evidence="1">2,3-bisphosphoglycerate-independent phosphoglycerate mutase</fullName>
        <shortName evidence="1">BPG-independent PGAM</shortName>
        <shortName evidence="1">Phosphoglyceromutase</shortName>
        <shortName evidence="1">iPGM</shortName>
        <ecNumber evidence="1">5.4.2.12</ecNumber>
    </recommendedName>
</protein>
<comment type="function">
    <text evidence="1">Catalyzes the interconversion of 2-phosphoglycerate and 3-phosphoglycerate.</text>
</comment>
<comment type="catalytic activity">
    <reaction evidence="1">
        <text>(2R)-2-phosphoglycerate = (2R)-3-phosphoglycerate</text>
        <dbReference type="Rhea" id="RHEA:15901"/>
        <dbReference type="ChEBI" id="CHEBI:58272"/>
        <dbReference type="ChEBI" id="CHEBI:58289"/>
        <dbReference type="EC" id="5.4.2.12"/>
    </reaction>
</comment>
<comment type="cofactor">
    <cofactor evidence="1">
        <name>Mn(2+)</name>
        <dbReference type="ChEBI" id="CHEBI:29035"/>
    </cofactor>
    <text evidence="1">Binds 2 manganese ions per subunit.</text>
</comment>
<comment type="pathway">
    <text evidence="1">Carbohydrate degradation; glycolysis; pyruvate from D-glyceraldehyde 3-phosphate: step 3/5.</text>
</comment>
<comment type="subunit">
    <text evidence="1">Monomer.</text>
</comment>
<comment type="similarity">
    <text evidence="1">Belongs to the BPG-independent phosphoglycerate mutase family.</text>
</comment>
<proteinExistence type="inferred from homology"/>
<keyword id="KW-0324">Glycolysis</keyword>
<keyword id="KW-0413">Isomerase</keyword>
<keyword id="KW-0464">Manganese</keyword>
<keyword id="KW-0479">Metal-binding</keyword>
<gene>
    <name evidence="1" type="primary">gpmI</name>
    <name type="ordered locus">Tcr_1956</name>
</gene>
<sequence length="521" mass="57733">MTKAVQIKNRPTGLIILDGWGHREATQHNAIAQAHTPNWDNLLKDYHHTLINTSGLAVGLPEGQMGNSEVGHMNLGAGRVVYQELTRIQKDIDDGRFFENNALVKAIDAASNRDHKVHILGLLSDGGVHSHISHIKASIKMAHDRGAKVYVHIFTDGRDTAPQSALQYIEELETFMKELGGGRIASVTGRYFALDRDNRWERVKKAYDAIACGSAEFEAKDAKEAVELAYARGENDEFIQATVIPRNNGKPARVKDGDSVIFMNFRSDRARQLTEAFIMDDFADFHRCKTPVLSAFVTLTEYKKNFEKFGALVAYRPTSLRNTFGEYVSKKGLKQLRIAETEKYAHVTFFFNGGVEEPNDNEVRILINSPQVATYDLQPEMSLPELKEKLIDAIKSGEYDTFICNIANPDMVGHTGDFNACVQAAEAVDEALGEILATIKAVDGEAIVTADHGNMEMLFNEETGKPLTSHTTFPVPFVYFGKKGYPLKDGGALCDVIPTLLDMMGIEKPEEMTGTSLIDKA</sequence>
<evidence type="ECO:0000255" key="1">
    <source>
        <dbReference type="HAMAP-Rule" id="MF_01038"/>
    </source>
</evidence>
<reference key="1">
    <citation type="journal article" date="2006" name="PLoS Biol.">
        <title>The genome of deep-sea vent chemolithoautotroph Thiomicrospira crunogena XCL-2.</title>
        <authorList>
            <person name="Scott K.M."/>
            <person name="Sievert S.M."/>
            <person name="Abril F.N."/>
            <person name="Ball L.A."/>
            <person name="Barrett C.J."/>
            <person name="Blake R.A."/>
            <person name="Boller A.J."/>
            <person name="Chain P.S.G."/>
            <person name="Clark J.A."/>
            <person name="Davis C.R."/>
            <person name="Detter C."/>
            <person name="Do K.F."/>
            <person name="Dobrinski K.P."/>
            <person name="Faza B.I."/>
            <person name="Fitzpatrick K.A."/>
            <person name="Freyermuth S.K."/>
            <person name="Harmer T.L."/>
            <person name="Hauser L.J."/>
            <person name="Huegler M."/>
            <person name="Kerfeld C.A."/>
            <person name="Klotz M.G."/>
            <person name="Kong W.W."/>
            <person name="Land M."/>
            <person name="Lapidus A."/>
            <person name="Larimer F.W."/>
            <person name="Longo D.L."/>
            <person name="Lucas S."/>
            <person name="Malfatti S.A."/>
            <person name="Massey S.E."/>
            <person name="Martin D.D."/>
            <person name="McCuddin Z."/>
            <person name="Meyer F."/>
            <person name="Moore J.L."/>
            <person name="Ocampo L.H. Jr."/>
            <person name="Paul J.H."/>
            <person name="Paulsen I.T."/>
            <person name="Reep D.K."/>
            <person name="Ren Q."/>
            <person name="Ross R.L."/>
            <person name="Sato P.Y."/>
            <person name="Thomas P."/>
            <person name="Tinkham L.E."/>
            <person name="Zeruth G.T."/>
        </authorList>
    </citation>
    <scope>NUCLEOTIDE SEQUENCE [LARGE SCALE GENOMIC DNA]</scope>
    <source>
        <strain>DSM 25203 / XCL-2</strain>
    </source>
</reference>
<dbReference type="EC" id="5.4.2.12" evidence="1"/>
<dbReference type="EMBL" id="CP000109">
    <property type="protein sequence ID" value="ABB42546.1"/>
    <property type="molecule type" value="Genomic_DNA"/>
</dbReference>
<dbReference type="SMR" id="Q31E77"/>
<dbReference type="STRING" id="317025.Tcr_1956"/>
<dbReference type="KEGG" id="tcx:Tcr_1956"/>
<dbReference type="eggNOG" id="COG0696">
    <property type="taxonomic scope" value="Bacteria"/>
</dbReference>
<dbReference type="HOGENOM" id="CLU_026099_2_0_6"/>
<dbReference type="OrthoDB" id="9800863at2"/>
<dbReference type="UniPathway" id="UPA00109">
    <property type="reaction ID" value="UER00186"/>
</dbReference>
<dbReference type="GO" id="GO:0005829">
    <property type="term" value="C:cytosol"/>
    <property type="evidence" value="ECO:0007669"/>
    <property type="project" value="TreeGrafter"/>
</dbReference>
<dbReference type="GO" id="GO:0030145">
    <property type="term" value="F:manganese ion binding"/>
    <property type="evidence" value="ECO:0007669"/>
    <property type="project" value="UniProtKB-UniRule"/>
</dbReference>
<dbReference type="GO" id="GO:0004619">
    <property type="term" value="F:phosphoglycerate mutase activity"/>
    <property type="evidence" value="ECO:0007669"/>
    <property type="project" value="UniProtKB-EC"/>
</dbReference>
<dbReference type="GO" id="GO:0006007">
    <property type="term" value="P:glucose catabolic process"/>
    <property type="evidence" value="ECO:0007669"/>
    <property type="project" value="InterPro"/>
</dbReference>
<dbReference type="GO" id="GO:0006096">
    <property type="term" value="P:glycolytic process"/>
    <property type="evidence" value="ECO:0007669"/>
    <property type="project" value="UniProtKB-UniRule"/>
</dbReference>
<dbReference type="CDD" id="cd16010">
    <property type="entry name" value="iPGM"/>
    <property type="match status" value="1"/>
</dbReference>
<dbReference type="FunFam" id="3.40.1450.10:FF:000001">
    <property type="entry name" value="2,3-bisphosphoglycerate-independent phosphoglycerate mutase"/>
    <property type="match status" value="1"/>
</dbReference>
<dbReference type="Gene3D" id="3.40.720.10">
    <property type="entry name" value="Alkaline Phosphatase, subunit A"/>
    <property type="match status" value="1"/>
</dbReference>
<dbReference type="Gene3D" id="3.40.1450.10">
    <property type="entry name" value="BPG-independent phosphoglycerate mutase, domain B"/>
    <property type="match status" value="1"/>
</dbReference>
<dbReference type="HAMAP" id="MF_01038">
    <property type="entry name" value="GpmI"/>
    <property type="match status" value="1"/>
</dbReference>
<dbReference type="InterPro" id="IPR017850">
    <property type="entry name" value="Alkaline_phosphatase_core_sf"/>
</dbReference>
<dbReference type="InterPro" id="IPR011258">
    <property type="entry name" value="BPG-indep_PGM_N"/>
</dbReference>
<dbReference type="InterPro" id="IPR006124">
    <property type="entry name" value="Metalloenzyme"/>
</dbReference>
<dbReference type="InterPro" id="IPR036646">
    <property type="entry name" value="PGAM_B_sf"/>
</dbReference>
<dbReference type="InterPro" id="IPR005995">
    <property type="entry name" value="Pgm_bpd_ind"/>
</dbReference>
<dbReference type="NCBIfam" id="TIGR01307">
    <property type="entry name" value="pgm_bpd_ind"/>
    <property type="match status" value="1"/>
</dbReference>
<dbReference type="PANTHER" id="PTHR31637">
    <property type="entry name" value="2,3-BISPHOSPHOGLYCERATE-INDEPENDENT PHOSPHOGLYCERATE MUTASE"/>
    <property type="match status" value="1"/>
</dbReference>
<dbReference type="PANTHER" id="PTHR31637:SF0">
    <property type="entry name" value="2,3-BISPHOSPHOGLYCERATE-INDEPENDENT PHOSPHOGLYCERATE MUTASE"/>
    <property type="match status" value="1"/>
</dbReference>
<dbReference type="Pfam" id="PF06415">
    <property type="entry name" value="iPGM_N"/>
    <property type="match status" value="1"/>
</dbReference>
<dbReference type="Pfam" id="PF01676">
    <property type="entry name" value="Metalloenzyme"/>
    <property type="match status" value="1"/>
</dbReference>
<dbReference type="PIRSF" id="PIRSF001492">
    <property type="entry name" value="IPGAM"/>
    <property type="match status" value="1"/>
</dbReference>
<dbReference type="SUPFAM" id="SSF64158">
    <property type="entry name" value="2,3-Bisphosphoglycerate-independent phosphoglycerate mutase, substrate-binding domain"/>
    <property type="match status" value="1"/>
</dbReference>
<dbReference type="SUPFAM" id="SSF53649">
    <property type="entry name" value="Alkaline phosphatase-like"/>
    <property type="match status" value="1"/>
</dbReference>
<organism>
    <name type="scientific">Hydrogenovibrio crunogenus (strain DSM 25203 / XCL-2)</name>
    <name type="common">Thiomicrospira crunogena</name>
    <dbReference type="NCBI Taxonomy" id="317025"/>
    <lineage>
        <taxon>Bacteria</taxon>
        <taxon>Pseudomonadati</taxon>
        <taxon>Pseudomonadota</taxon>
        <taxon>Gammaproteobacteria</taxon>
        <taxon>Thiotrichales</taxon>
        <taxon>Piscirickettsiaceae</taxon>
        <taxon>Hydrogenovibrio</taxon>
    </lineage>
</organism>
<feature type="chain" id="PRO_1000064014" description="2,3-bisphosphoglycerate-independent phosphoglycerate mutase">
    <location>
        <begin position="1"/>
        <end position="521"/>
    </location>
</feature>
<feature type="active site" description="Phosphoserine intermediate" evidence="1">
    <location>
        <position position="68"/>
    </location>
</feature>
<feature type="binding site" evidence="1">
    <location>
        <position position="18"/>
    </location>
    <ligand>
        <name>Mn(2+)</name>
        <dbReference type="ChEBI" id="CHEBI:29035"/>
        <label>2</label>
    </ligand>
</feature>
<feature type="binding site" evidence="1">
    <location>
        <position position="68"/>
    </location>
    <ligand>
        <name>Mn(2+)</name>
        <dbReference type="ChEBI" id="CHEBI:29035"/>
        <label>2</label>
    </ligand>
</feature>
<feature type="binding site" evidence="1">
    <location>
        <position position="129"/>
    </location>
    <ligand>
        <name>substrate</name>
    </ligand>
</feature>
<feature type="binding site" evidence="1">
    <location>
        <begin position="158"/>
        <end position="159"/>
    </location>
    <ligand>
        <name>substrate</name>
    </ligand>
</feature>
<feature type="binding site" evidence="1">
    <location>
        <position position="190"/>
    </location>
    <ligand>
        <name>substrate</name>
    </ligand>
</feature>
<feature type="binding site" evidence="1">
    <location>
        <position position="196"/>
    </location>
    <ligand>
        <name>substrate</name>
    </ligand>
</feature>
<feature type="binding site" evidence="1">
    <location>
        <begin position="266"/>
        <end position="269"/>
    </location>
    <ligand>
        <name>substrate</name>
    </ligand>
</feature>
<feature type="binding site" evidence="1">
    <location>
        <position position="343"/>
    </location>
    <ligand>
        <name>substrate</name>
    </ligand>
</feature>
<feature type="binding site" evidence="1">
    <location>
        <position position="410"/>
    </location>
    <ligand>
        <name>Mn(2+)</name>
        <dbReference type="ChEBI" id="CHEBI:29035"/>
        <label>1</label>
    </ligand>
</feature>
<feature type="binding site" evidence="1">
    <location>
        <position position="414"/>
    </location>
    <ligand>
        <name>Mn(2+)</name>
        <dbReference type="ChEBI" id="CHEBI:29035"/>
        <label>1</label>
    </ligand>
</feature>
<feature type="binding site" evidence="1">
    <location>
        <position position="451"/>
    </location>
    <ligand>
        <name>Mn(2+)</name>
        <dbReference type="ChEBI" id="CHEBI:29035"/>
        <label>2</label>
    </ligand>
</feature>
<feature type="binding site" evidence="1">
    <location>
        <position position="452"/>
    </location>
    <ligand>
        <name>Mn(2+)</name>
        <dbReference type="ChEBI" id="CHEBI:29035"/>
        <label>2</label>
    </ligand>
</feature>
<feature type="binding site" evidence="1">
    <location>
        <position position="470"/>
    </location>
    <ligand>
        <name>Mn(2+)</name>
        <dbReference type="ChEBI" id="CHEBI:29035"/>
        <label>1</label>
    </ligand>
</feature>
<accession>Q31E77</accession>